<feature type="chain" id="PRO_1000081537" description="Small ribosomal subunit protein uS10">
    <location>
        <begin position="1"/>
        <end position="102"/>
    </location>
</feature>
<proteinExistence type="inferred from homology"/>
<name>RS10_BART1</name>
<sequence length="102" mass="11658">MNSQNIRIRLKAFDHRILDTSTREIVSTAKRTGANVRGPIPLPTRIEKFTVNRGPHIDKKSREQFEMRTHKRLLDIVDPTPQTVDALMKLDLSAGVDVEIKL</sequence>
<organism>
    <name type="scientific">Bartonella tribocorum (strain CIP 105476 / IBS 506)</name>
    <dbReference type="NCBI Taxonomy" id="382640"/>
    <lineage>
        <taxon>Bacteria</taxon>
        <taxon>Pseudomonadati</taxon>
        <taxon>Pseudomonadota</taxon>
        <taxon>Alphaproteobacteria</taxon>
        <taxon>Hyphomicrobiales</taxon>
        <taxon>Bartonellaceae</taxon>
        <taxon>Bartonella</taxon>
    </lineage>
</organism>
<reference key="1">
    <citation type="journal article" date="2007" name="Nat. Genet.">
        <title>Genomic analysis of Bartonella identifies type IV secretion systems as host adaptability factors.</title>
        <authorList>
            <person name="Saenz H.L."/>
            <person name="Engel P."/>
            <person name="Stoeckli M.C."/>
            <person name="Lanz C."/>
            <person name="Raddatz G."/>
            <person name="Vayssier-Taussat M."/>
            <person name="Birtles R."/>
            <person name="Schuster S.C."/>
            <person name="Dehio C."/>
        </authorList>
    </citation>
    <scope>NUCLEOTIDE SEQUENCE [LARGE SCALE GENOMIC DNA]</scope>
    <source>
        <strain>CIP 105476 / IBS 506</strain>
    </source>
</reference>
<evidence type="ECO:0000255" key="1">
    <source>
        <dbReference type="HAMAP-Rule" id="MF_00508"/>
    </source>
</evidence>
<evidence type="ECO:0000305" key="2"/>
<keyword id="KW-0687">Ribonucleoprotein</keyword>
<keyword id="KW-0689">Ribosomal protein</keyword>
<comment type="function">
    <text evidence="1">Involved in the binding of tRNA to the ribosomes.</text>
</comment>
<comment type="subunit">
    <text evidence="1">Part of the 30S ribosomal subunit.</text>
</comment>
<comment type="similarity">
    <text evidence="1">Belongs to the universal ribosomal protein uS10 family.</text>
</comment>
<protein>
    <recommendedName>
        <fullName evidence="1">Small ribosomal subunit protein uS10</fullName>
    </recommendedName>
    <alternativeName>
        <fullName evidence="2">30S ribosomal protein S10</fullName>
    </alternativeName>
</protein>
<accession>A9IW28</accession>
<dbReference type="EMBL" id="AM260525">
    <property type="protein sequence ID" value="CAK01865.1"/>
    <property type="molecule type" value="Genomic_DNA"/>
</dbReference>
<dbReference type="RefSeq" id="WP_005773267.1">
    <property type="nucleotide sequence ID" value="NC_010161.1"/>
</dbReference>
<dbReference type="SMR" id="A9IW28"/>
<dbReference type="GeneID" id="71061560"/>
<dbReference type="KEGG" id="btr:BT_1519"/>
<dbReference type="eggNOG" id="COG0051">
    <property type="taxonomic scope" value="Bacteria"/>
</dbReference>
<dbReference type="HOGENOM" id="CLU_122625_1_3_5"/>
<dbReference type="Proteomes" id="UP000001592">
    <property type="component" value="Chromosome"/>
</dbReference>
<dbReference type="GO" id="GO:1990904">
    <property type="term" value="C:ribonucleoprotein complex"/>
    <property type="evidence" value="ECO:0007669"/>
    <property type="project" value="UniProtKB-KW"/>
</dbReference>
<dbReference type="GO" id="GO:0005840">
    <property type="term" value="C:ribosome"/>
    <property type="evidence" value="ECO:0007669"/>
    <property type="project" value="UniProtKB-KW"/>
</dbReference>
<dbReference type="GO" id="GO:0003735">
    <property type="term" value="F:structural constituent of ribosome"/>
    <property type="evidence" value="ECO:0007669"/>
    <property type="project" value="InterPro"/>
</dbReference>
<dbReference type="GO" id="GO:0000049">
    <property type="term" value="F:tRNA binding"/>
    <property type="evidence" value="ECO:0007669"/>
    <property type="project" value="UniProtKB-UniRule"/>
</dbReference>
<dbReference type="GO" id="GO:0006412">
    <property type="term" value="P:translation"/>
    <property type="evidence" value="ECO:0007669"/>
    <property type="project" value="UniProtKB-UniRule"/>
</dbReference>
<dbReference type="FunFam" id="3.30.70.600:FF:000001">
    <property type="entry name" value="30S ribosomal protein S10"/>
    <property type="match status" value="1"/>
</dbReference>
<dbReference type="Gene3D" id="3.30.70.600">
    <property type="entry name" value="Ribosomal protein S10 domain"/>
    <property type="match status" value="1"/>
</dbReference>
<dbReference type="HAMAP" id="MF_00508">
    <property type="entry name" value="Ribosomal_uS10"/>
    <property type="match status" value="1"/>
</dbReference>
<dbReference type="InterPro" id="IPR001848">
    <property type="entry name" value="Ribosomal_uS10"/>
</dbReference>
<dbReference type="InterPro" id="IPR018268">
    <property type="entry name" value="Ribosomal_uS10_CS"/>
</dbReference>
<dbReference type="InterPro" id="IPR027486">
    <property type="entry name" value="Ribosomal_uS10_dom"/>
</dbReference>
<dbReference type="InterPro" id="IPR036838">
    <property type="entry name" value="Ribosomal_uS10_dom_sf"/>
</dbReference>
<dbReference type="NCBIfam" id="NF001861">
    <property type="entry name" value="PRK00596.1"/>
    <property type="match status" value="1"/>
</dbReference>
<dbReference type="NCBIfam" id="TIGR01049">
    <property type="entry name" value="rpsJ_bact"/>
    <property type="match status" value="1"/>
</dbReference>
<dbReference type="PANTHER" id="PTHR11700">
    <property type="entry name" value="30S RIBOSOMAL PROTEIN S10 FAMILY MEMBER"/>
    <property type="match status" value="1"/>
</dbReference>
<dbReference type="Pfam" id="PF00338">
    <property type="entry name" value="Ribosomal_S10"/>
    <property type="match status" value="1"/>
</dbReference>
<dbReference type="PRINTS" id="PR00971">
    <property type="entry name" value="RIBOSOMALS10"/>
</dbReference>
<dbReference type="SMART" id="SM01403">
    <property type="entry name" value="Ribosomal_S10"/>
    <property type="match status" value="1"/>
</dbReference>
<dbReference type="SUPFAM" id="SSF54999">
    <property type="entry name" value="Ribosomal protein S10"/>
    <property type="match status" value="1"/>
</dbReference>
<dbReference type="PROSITE" id="PS00361">
    <property type="entry name" value="RIBOSOMAL_S10"/>
    <property type="match status" value="1"/>
</dbReference>
<gene>
    <name evidence="1" type="primary">rpsJ</name>
    <name type="ordered locus">BT_1519</name>
</gene>